<feature type="chain" id="PRO_1000091242" description="UPF0102 protein Glov_2230">
    <location>
        <begin position="1"/>
        <end position="127"/>
    </location>
</feature>
<protein>
    <recommendedName>
        <fullName evidence="1">UPF0102 protein Glov_2230</fullName>
    </recommendedName>
</protein>
<sequence length="127" mass="14122">MPLIGKGNQAVGDLGEQTAADYLVKQGYRILERNFRSRGGEVDIVAKDRQGCIAFVEVKTRRSLAYGLPQLAVTQRKQHQISKGALAWISKNRLHECTARFDVIAVLLQDGSEPTIEHIPNAFDLAY</sequence>
<accession>B3E4L0</accession>
<gene>
    <name type="ordered locus">Glov_2230</name>
</gene>
<name>Y2230_TRIL1</name>
<comment type="similarity">
    <text evidence="1">Belongs to the UPF0102 family.</text>
</comment>
<reference key="1">
    <citation type="submission" date="2008-05" db="EMBL/GenBank/DDBJ databases">
        <title>Complete sequence of chromosome of Geobacter lovleyi SZ.</title>
        <authorList>
            <consortium name="US DOE Joint Genome Institute"/>
            <person name="Lucas S."/>
            <person name="Copeland A."/>
            <person name="Lapidus A."/>
            <person name="Glavina del Rio T."/>
            <person name="Dalin E."/>
            <person name="Tice H."/>
            <person name="Bruce D."/>
            <person name="Goodwin L."/>
            <person name="Pitluck S."/>
            <person name="Chertkov O."/>
            <person name="Meincke L."/>
            <person name="Brettin T."/>
            <person name="Detter J.C."/>
            <person name="Han C."/>
            <person name="Tapia R."/>
            <person name="Kuske C.R."/>
            <person name="Schmutz J."/>
            <person name="Larimer F."/>
            <person name="Land M."/>
            <person name="Hauser L."/>
            <person name="Kyrpides N."/>
            <person name="Mikhailova N."/>
            <person name="Sung Y."/>
            <person name="Fletcher K.E."/>
            <person name="Ritalahti K.M."/>
            <person name="Loeffler F.E."/>
            <person name="Richardson P."/>
        </authorList>
    </citation>
    <scope>NUCLEOTIDE SEQUENCE [LARGE SCALE GENOMIC DNA]</scope>
    <source>
        <strain>ATCC BAA-1151 / DSM 17278 / SZ</strain>
    </source>
</reference>
<keyword id="KW-1185">Reference proteome</keyword>
<proteinExistence type="inferred from homology"/>
<evidence type="ECO:0000255" key="1">
    <source>
        <dbReference type="HAMAP-Rule" id="MF_00048"/>
    </source>
</evidence>
<organism>
    <name type="scientific">Trichlorobacter lovleyi (strain ATCC BAA-1151 / DSM 17278 / SZ)</name>
    <name type="common">Geobacter lovleyi</name>
    <dbReference type="NCBI Taxonomy" id="398767"/>
    <lineage>
        <taxon>Bacteria</taxon>
        <taxon>Pseudomonadati</taxon>
        <taxon>Thermodesulfobacteriota</taxon>
        <taxon>Desulfuromonadia</taxon>
        <taxon>Geobacterales</taxon>
        <taxon>Geobacteraceae</taxon>
        <taxon>Trichlorobacter</taxon>
    </lineage>
</organism>
<dbReference type="EMBL" id="CP001089">
    <property type="protein sequence ID" value="ACD95946.1"/>
    <property type="molecule type" value="Genomic_DNA"/>
</dbReference>
<dbReference type="RefSeq" id="WP_012470282.1">
    <property type="nucleotide sequence ID" value="NC_010814.1"/>
</dbReference>
<dbReference type="SMR" id="B3E4L0"/>
<dbReference type="STRING" id="398767.Glov_2230"/>
<dbReference type="KEGG" id="glo:Glov_2230"/>
<dbReference type="eggNOG" id="COG0792">
    <property type="taxonomic scope" value="Bacteria"/>
</dbReference>
<dbReference type="HOGENOM" id="CLU_115353_2_1_7"/>
<dbReference type="OrthoDB" id="9794876at2"/>
<dbReference type="Proteomes" id="UP000002420">
    <property type="component" value="Chromosome"/>
</dbReference>
<dbReference type="GO" id="GO:0003676">
    <property type="term" value="F:nucleic acid binding"/>
    <property type="evidence" value="ECO:0007669"/>
    <property type="project" value="InterPro"/>
</dbReference>
<dbReference type="CDD" id="cd20736">
    <property type="entry name" value="PoNe_Nuclease"/>
    <property type="match status" value="1"/>
</dbReference>
<dbReference type="Gene3D" id="3.40.1350.10">
    <property type="match status" value="1"/>
</dbReference>
<dbReference type="HAMAP" id="MF_00048">
    <property type="entry name" value="UPF0102"/>
    <property type="match status" value="1"/>
</dbReference>
<dbReference type="InterPro" id="IPR011335">
    <property type="entry name" value="Restrct_endonuc-II-like"/>
</dbReference>
<dbReference type="InterPro" id="IPR011856">
    <property type="entry name" value="tRNA_endonuc-like_dom_sf"/>
</dbReference>
<dbReference type="InterPro" id="IPR003509">
    <property type="entry name" value="UPF0102_YraN-like"/>
</dbReference>
<dbReference type="NCBIfam" id="NF009150">
    <property type="entry name" value="PRK12497.1-3"/>
    <property type="match status" value="1"/>
</dbReference>
<dbReference type="NCBIfam" id="NF009154">
    <property type="entry name" value="PRK12497.3-3"/>
    <property type="match status" value="1"/>
</dbReference>
<dbReference type="NCBIfam" id="TIGR00252">
    <property type="entry name" value="YraN family protein"/>
    <property type="match status" value="1"/>
</dbReference>
<dbReference type="PANTHER" id="PTHR34039">
    <property type="entry name" value="UPF0102 PROTEIN YRAN"/>
    <property type="match status" value="1"/>
</dbReference>
<dbReference type="PANTHER" id="PTHR34039:SF1">
    <property type="entry name" value="UPF0102 PROTEIN YRAN"/>
    <property type="match status" value="1"/>
</dbReference>
<dbReference type="Pfam" id="PF02021">
    <property type="entry name" value="UPF0102"/>
    <property type="match status" value="1"/>
</dbReference>
<dbReference type="SUPFAM" id="SSF52980">
    <property type="entry name" value="Restriction endonuclease-like"/>
    <property type="match status" value="1"/>
</dbReference>